<sequence length="251" mass="27907">MDERHEAAGETSEKPKVLFLLNSYYGPFYDDGDNTGVNVVDLYEAFKVFEENGFDIVIASDTGDYGFDDKSFRDPAIVDETQSIFSNPDCSLMKKLKNIARLDRLNPSDYVIVYIPGGYGCSFDFPHAKVVQDFLYRFYETKGIICAVAQANIALAYTTNSDGQALCTNRRVTGCTWKDEVQNGVLNVMNRLNFYSFGHIAENIGAIFESPPVYVEDPFIVEDGQLFTGSNTNSAKGVAMEAVRAVLNYDG</sequence>
<dbReference type="EC" id="4.2.1.130" evidence="1"/>
<dbReference type="EMBL" id="CU329670">
    <property type="protein sequence ID" value="CAA91953.1"/>
    <property type="molecule type" value="Genomic_DNA"/>
</dbReference>
<dbReference type="PIR" id="S62578">
    <property type="entry name" value="S62578"/>
</dbReference>
<dbReference type="RefSeq" id="NP_594492.1">
    <property type="nucleotide sequence ID" value="NM_001019921.2"/>
</dbReference>
<dbReference type="SMR" id="Q09918"/>
<dbReference type="BioGRID" id="278183">
    <property type="interactions" value="3"/>
</dbReference>
<dbReference type="FunCoup" id="Q09918">
    <property type="interactions" value="441"/>
</dbReference>
<dbReference type="STRING" id="284812.Q09918"/>
<dbReference type="PaxDb" id="4896-SPAC1F7.06.1"/>
<dbReference type="EnsemblFungi" id="SPAC1F7.06.1">
    <property type="protein sequence ID" value="SPAC1F7.06.1:pep"/>
    <property type="gene ID" value="SPAC1F7.06"/>
</dbReference>
<dbReference type="GeneID" id="2541687"/>
<dbReference type="KEGG" id="spo:2541687"/>
<dbReference type="PomBase" id="SPAC1F7.06">
    <property type="gene designation" value="hsp3105"/>
</dbReference>
<dbReference type="VEuPathDB" id="FungiDB:SPAC1F7.06"/>
<dbReference type="eggNOG" id="ENOG502RZ3Y">
    <property type="taxonomic scope" value="Eukaryota"/>
</dbReference>
<dbReference type="HOGENOM" id="CLU_070319_1_0_1"/>
<dbReference type="InParanoid" id="Q09918"/>
<dbReference type="OMA" id="CWNRRIT"/>
<dbReference type="PhylomeDB" id="Q09918"/>
<dbReference type="PRO" id="PR:Q09918"/>
<dbReference type="Proteomes" id="UP000002485">
    <property type="component" value="Chromosome I"/>
</dbReference>
<dbReference type="GO" id="GO:0005737">
    <property type="term" value="C:cytoplasm"/>
    <property type="evidence" value="ECO:0000318"/>
    <property type="project" value="GO_Central"/>
</dbReference>
<dbReference type="GO" id="GO:0005829">
    <property type="term" value="C:cytosol"/>
    <property type="evidence" value="ECO:0007005"/>
    <property type="project" value="PomBase"/>
</dbReference>
<dbReference type="GO" id="GO:0005634">
    <property type="term" value="C:nucleus"/>
    <property type="evidence" value="ECO:0007005"/>
    <property type="project" value="PomBase"/>
</dbReference>
<dbReference type="GO" id="GO:0019172">
    <property type="term" value="F:glyoxalase III activity"/>
    <property type="evidence" value="ECO:0000318"/>
    <property type="project" value="GO_Central"/>
</dbReference>
<dbReference type="GO" id="GO:1990748">
    <property type="term" value="P:cellular detoxification"/>
    <property type="evidence" value="ECO:0000305"/>
    <property type="project" value="PomBase"/>
</dbReference>
<dbReference type="GO" id="GO:0019243">
    <property type="term" value="P:methylglyoxal catabolic process to D-lactate via S-lactoyl-glutathione"/>
    <property type="evidence" value="ECO:0000318"/>
    <property type="project" value="GO_Central"/>
</dbReference>
<dbReference type="Gene3D" id="3.40.50.880">
    <property type="match status" value="1"/>
</dbReference>
<dbReference type="InterPro" id="IPR029062">
    <property type="entry name" value="Class_I_gatase-like"/>
</dbReference>
<dbReference type="InterPro" id="IPR002818">
    <property type="entry name" value="DJ-1/PfpI"/>
</dbReference>
<dbReference type="InterPro" id="IPR050325">
    <property type="entry name" value="Prot/Nucl_acid_deglycase"/>
</dbReference>
<dbReference type="PANTHER" id="PTHR48094:SF11">
    <property type="entry name" value="GLUTATHIONE-INDEPENDENT GLYOXALASE HSP31-RELATED"/>
    <property type="match status" value="1"/>
</dbReference>
<dbReference type="PANTHER" id="PTHR48094">
    <property type="entry name" value="PROTEIN/NUCLEIC ACID DEGLYCASE DJ-1-RELATED"/>
    <property type="match status" value="1"/>
</dbReference>
<dbReference type="Pfam" id="PF01965">
    <property type="entry name" value="DJ-1_PfpI"/>
    <property type="match status" value="1"/>
</dbReference>
<dbReference type="SUPFAM" id="SSF52317">
    <property type="entry name" value="Class I glutamine amidotransferase-like"/>
    <property type="match status" value="1"/>
</dbReference>
<reference key="1">
    <citation type="journal article" date="2002" name="Nature">
        <title>The genome sequence of Schizosaccharomyces pombe.</title>
        <authorList>
            <person name="Wood V."/>
            <person name="Gwilliam R."/>
            <person name="Rajandream M.A."/>
            <person name="Lyne M.H."/>
            <person name="Lyne R."/>
            <person name="Stewart A."/>
            <person name="Sgouros J.G."/>
            <person name="Peat N."/>
            <person name="Hayles J."/>
            <person name="Baker S.G."/>
            <person name="Basham D."/>
            <person name="Bowman S."/>
            <person name="Brooks K."/>
            <person name="Brown D."/>
            <person name="Brown S."/>
            <person name="Chillingworth T."/>
            <person name="Churcher C.M."/>
            <person name="Collins M."/>
            <person name="Connor R."/>
            <person name="Cronin A."/>
            <person name="Davis P."/>
            <person name="Feltwell T."/>
            <person name="Fraser A."/>
            <person name="Gentles S."/>
            <person name="Goble A."/>
            <person name="Hamlin N."/>
            <person name="Harris D.E."/>
            <person name="Hidalgo J."/>
            <person name="Hodgson G."/>
            <person name="Holroyd S."/>
            <person name="Hornsby T."/>
            <person name="Howarth S."/>
            <person name="Huckle E.J."/>
            <person name="Hunt S."/>
            <person name="Jagels K."/>
            <person name="James K.D."/>
            <person name="Jones L."/>
            <person name="Jones M."/>
            <person name="Leather S."/>
            <person name="McDonald S."/>
            <person name="McLean J."/>
            <person name="Mooney P."/>
            <person name="Moule S."/>
            <person name="Mungall K.L."/>
            <person name="Murphy L.D."/>
            <person name="Niblett D."/>
            <person name="Odell C."/>
            <person name="Oliver K."/>
            <person name="O'Neil S."/>
            <person name="Pearson D."/>
            <person name="Quail M.A."/>
            <person name="Rabbinowitsch E."/>
            <person name="Rutherford K.M."/>
            <person name="Rutter S."/>
            <person name="Saunders D."/>
            <person name="Seeger K."/>
            <person name="Sharp S."/>
            <person name="Skelton J."/>
            <person name="Simmonds M.N."/>
            <person name="Squares R."/>
            <person name="Squares S."/>
            <person name="Stevens K."/>
            <person name="Taylor K."/>
            <person name="Taylor R.G."/>
            <person name="Tivey A."/>
            <person name="Walsh S.V."/>
            <person name="Warren T."/>
            <person name="Whitehead S."/>
            <person name="Woodward J.R."/>
            <person name="Volckaert G."/>
            <person name="Aert R."/>
            <person name="Robben J."/>
            <person name="Grymonprez B."/>
            <person name="Weltjens I."/>
            <person name="Vanstreels E."/>
            <person name="Rieger M."/>
            <person name="Schaefer M."/>
            <person name="Mueller-Auer S."/>
            <person name="Gabel C."/>
            <person name="Fuchs M."/>
            <person name="Duesterhoeft A."/>
            <person name="Fritzc C."/>
            <person name="Holzer E."/>
            <person name="Moestl D."/>
            <person name="Hilbert H."/>
            <person name="Borzym K."/>
            <person name="Langer I."/>
            <person name="Beck A."/>
            <person name="Lehrach H."/>
            <person name="Reinhardt R."/>
            <person name="Pohl T.M."/>
            <person name="Eger P."/>
            <person name="Zimmermann W."/>
            <person name="Wedler H."/>
            <person name="Wambutt R."/>
            <person name="Purnelle B."/>
            <person name="Goffeau A."/>
            <person name="Cadieu E."/>
            <person name="Dreano S."/>
            <person name="Gloux S."/>
            <person name="Lelaure V."/>
            <person name="Mottier S."/>
            <person name="Galibert F."/>
            <person name="Aves S.J."/>
            <person name="Xiang Z."/>
            <person name="Hunt C."/>
            <person name="Moore K."/>
            <person name="Hurst S.M."/>
            <person name="Lucas M."/>
            <person name="Rochet M."/>
            <person name="Gaillardin C."/>
            <person name="Tallada V.A."/>
            <person name="Garzon A."/>
            <person name="Thode G."/>
            <person name="Daga R.R."/>
            <person name="Cruzado L."/>
            <person name="Jimenez J."/>
            <person name="Sanchez M."/>
            <person name="del Rey F."/>
            <person name="Benito J."/>
            <person name="Dominguez A."/>
            <person name="Revuelta J.L."/>
            <person name="Moreno S."/>
            <person name="Armstrong J."/>
            <person name="Forsburg S.L."/>
            <person name="Cerutti L."/>
            <person name="Lowe T."/>
            <person name="McCombie W.R."/>
            <person name="Paulsen I."/>
            <person name="Potashkin J."/>
            <person name="Shpakovski G.V."/>
            <person name="Ussery D."/>
            <person name="Barrell B.G."/>
            <person name="Nurse P."/>
        </authorList>
    </citation>
    <scope>NUCLEOTIDE SEQUENCE [LARGE SCALE GENOMIC DNA]</scope>
    <source>
        <strain>972 / ATCC 24843</strain>
    </source>
</reference>
<reference key="2">
    <citation type="journal article" date="2006" name="Nat. Biotechnol.">
        <title>ORFeome cloning and global analysis of protein localization in the fission yeast Schizosaccharomyces pombe.</title>
        <authorList>
            <person name="Matsuyama A."/>
            <person name="Arai R."/>
            <person name="Yashiroda Y."/>
            <person name="Shirai A."/>
            <person name="Kamata A."/>
            <person name="Sekido S."/>
            <person name="Kobayashi Y."/>
            <person name="Hashimoto A."/>
            <person name="Hamamoto M."/>
            <person name="Hiraoka Y."/>
            <person name="Horinouchi S."/>
            <person name="Yoshida M."/>
        </authorList>
    </citation>
    <scope>SUBCELLULAR LOCATION [LARGE SCALE ANALYSIS]</scope>
</reference>
<reference key="3">
    <citation type="journal article" date="2014" name="BMC Evol. Biol.">
        <title>Identification of glutathione (GSH)-independent glyoxalase III from Schizosaccharomyces pombe.</title>
        <authorList>
            <person name="Zhao Q."/>
            <person name="Su Y."/>
            <person name="Wang Z."/>
            <person name="Chen C."/>
            <person name="Wu T."/>
            <person name="Huang Y."/>
        </authorList>
    </citation>
    <scope>GENE NAME</scope>
    <scope>LACK OF ACTIVE SITE RESIDUES</scope>
</reference>
<name>HSP35_SCHPO</name>
<feature type="chain" id="PRO_0000157855" description="Putative glutathione-independent glyoxalase hsp3105">
    <location>
        <begin position="1"/>
        <end position="251"/>
    </location>
</feature>
<keyword id="KW-0963">Cytoplasm</keyword>
<keyword id="KW-0456">Lyase</keyword>
<keyword id="KW-0539">Nucleus</keyword>
<keyword id="KW-1185">Reference proteome</keyword>
<keyword id="KW-0346">Stress response</keyword>
<gene>
    <name evidence="4" type="primary">hsp3105</name>
    <name evidence="7" type="ORF">SPAC1F7.06</name>
</gene>
<accession>Q09918</accession>
<comment type="function">
    <text evidence="1 2">May catalyze the conversion of methylglyoxal (MG) to D-lactate in a single glutathione (GSH)-independent step. May play a role in detoxifying endogenously produced glyoxals. Involved in protection against reactive oxygen species (ROS).</text>
</comment>
<comment type="catalytic activity">
    <reaction evidence="1">
        <text>methylglyoxal + H2O = (R)-lactate + H(+)</text>
        <dbReference type="Rhea" id="RHEA:27754"/>
        <dbReference type="ChEBI" id="CHEBI:15377"/>
        <dbReference type="ChEBI" id="CHEBI:15378"/>
        <dbReference type="ChEBI" id="CHEBI:16004"/>
        <dbReference type="ChEBI" id="CHEBI:17158"/>
        <dbReference type="EC" id="4.2.1.130"/>
    </reaction>
</comment>
<comment type="subcellular location">
    <subcellularLocation>
        <location evidence="3">Cytoplasm</location>
    </subcellularLocation>
    <subcellularLocation>
        <location evidence="3">Nucleus</location>
    </subcellularLocation>
</comment>
<comment type="similarity">
    <text evidence="5">Belongs to the peptidase C56 family. HSP31-like subfamily.</text>
</comment>
<comment type="caution">
    <text evidence="6">Lacks the conserved active site residues critical for glyoxalase activity. Its enzyme activity is therefore unsure.</text>
</comment>
<protein>
    <recommendedName>
        <fullName evidence="1">Putative glutathione-independent glyoxalase hsp3105</fullName>
        <ecNumber evidence="1">4.2.1.130</ecNumber>
    </recommendedName>
    <alternativeName>
        <fullName evidence="1">Glyoxalase 3 homolog 5</fullName>
    </alternativeName>
    <alternativeName>
        <fullName evidence="1">Heat shock protein 31 homolog 5</fullName>
    </alternativeName>
</protein>
<proteinExistence type="inferred from homology"/>
<evidence type="ECO:0000250" key="1">
    <source>
        <dbReference type="UniProtKB" id="O74914"/>
    </source>
</evidence>
<evidence type="ECO:0000250" key="2">
    <source>
        <dbReference type="UniProtKB" id="Q04432"/>
    </source>
</evidence>
<evidence type="ECO:0000269" key="3">
    <source>
    </source>
</evidence>
<evidence type="ECO:0000303" key="4">
    <source>
    </source>
</evidence>
<evidence type="ECO:0000305" key="5"/>
<evidence type="ECO:0000305" key="6">
    <source>
    </source>
</evidence>
<evidence type="ECO:0000312" key="7">
    <source>
        <dbReference type="PomBase" id="SPAC1F7.06"/>
    </source>
</evidence>
<organism>
    <name type="scientific">Schizosaccharomyces pombe (strain 972 / ATCC 24843)</name>
    <name type="common">Fission yeast</name>
    <dbReference type="NCBI Taxonomy" id="284812"/>
    <lineage>
        <taxon>Eukaryota</taxon>
        <taxon>Fungi</taxon>
        <taxon>Dikarya</taxon>
        <taxon>Ascomycota</taxon>
        <taxon>Taphrinomycotina</taxon>
        <taxon>Schizosaccharomycetes</taxon>
        <taxon>Schizosaccharomycetales</taxon>
        <taxon>Schizosaccharomycetaceae</taxon>
        <taxon>Schizosaccharomyces</taxon>
    </lineage>
</organism>